<accession>Q3IPM8</accession>
<proteinExistence type="inferred from homology"/>
<evidence type="ECO:0000255" key="1">
    <source>
        <dbReference type="HAMAP-Rule" id="MF_00292"/>
    </source>
</evidence>
<evidence type="ECO:0000305" key="2"/>
<feature type="chain" id="PRO_1000004124" description="Small ribosomal subunit protein eS28">
    <location>
        <begin position="1"/>
        <end position="75"/>
    </location>
</feature>
<keyword id="KW-1185">Reference proteome</keyword>
<keyword id="KW-0687">Ribonucleoprotein</keyword>
<keyword id="KW-0689">Ribosomal protein</keyword>
<reference key="1">
    <citation type="journal article" date="2005" name="Genome Res.">
        <title>Living with two extremes: conclusions from the genome sequence of Natronomonas pharaonis.</title>
        <authorList>
            <person name="Falb M."/>
            <person name="Pfeiffer F."/>
            <person name="Palm P."/>
            <person name="Rodewald K."/>
            <person name="Hickmann V."/>
            <person name="Tittor J."/>
            <person name="Oesterhelt D."/>
        </authorList>
    </citation>
    <scope>NUCLEOTIDE SEQUENCE [LARGE SCALE GENOMIC DNA]</scope>
    <source>
        <strain>ATCC 35678 / DSM 2160 / CIP 103997 / JCM 8858 / NBRC 14720 / NCIMB 2260 / Gabara</strain>
    </source>
</reference>
<comment type="similarity">
    <text evidence="1">Belongs to the eukaryotic ribosomal protein eS28 family.</text>
</comment>
<sequence length="75" mass="7989">MSAEEQEEGGATPAEVIEVVGETGMHGEAMQVKCRIQEGENQGRIIARNVLGPVRVGDVIQLRETAREADSIGGQ</sequence>
<gene>
    <name evidence="1" type="primary">rps28e</name>
    <name type="ordered locus">NP_3662A</name>
</gene>
<dbReference type="EMBL" id="CR936257">
    <property type="protein sequence ID" value="CAI49922.1"/>
    <property type="molecule type" value="Genomic_DNA"/>
</dbReference>
<dbReference type="RefSeq" id="WP_011323540.1">
    <property type="nucleotide sequence ID" value="NC_007426.1"/>
</dbReference>
<dbReference type="SMR" id="Q3IPM8"/>
<dbReference type="STRING" id="348780.NP_3662A"/>
<dbReference type="EnsemblBacteria" id="CAI49922">
    <property type="protein sequence ID" value="CAI49922"/>
    <property type="gene ID" value="NP_3662A"/>
</dbReference>
<dbReference type="GeneID" id="3703179"/>
<dbReference type="KEGG" id="nph:NP_3662A"/>
<dbReference type="eggNOG" id="arCOG04314">
    <property type="taxonomic scope" value="Archaea"/>
</dbReference>
<dbReference type="HOGENOM" id="CLU_178987_2_1_2"/>
<dbReference type="OrthoDB" id="7620at2157"/>
<dbReference type="Proteomes" id="UP000002698">
    <property type="component" value="Chromosome"/>
</dbReference>
<dbReference type="GO" id="GO:0022627">
    <property type="term" value="C:cytosolic small ribosomal subunit"/>
    <property type="evidence" value="ECO:0007669"/>
    <property type="project" value="TreeGrafter"/>
</dbReference>
<dbReference type="GO" id="GO:0003735">
    <property type="term" value="F:structural constituent of ribosome"/>
    <property type="evidence" value="ECO:0007669"/>
    <property type="project" value="InterPro"/>
</dbReference>
<dbReference type="GO" id="GO:0030490">
    <property type="term" value="P:maturation of SSU-rRNA"/>
    <property type="evidence" value="ECO:0007669"/>
    <property type="project" value="TreeGrafter"/>
</dbReference>
<dbReference type="GO" id="GO:0000028">
    <property type="term" value="P:ribosomal small subunit assembly"/>
    <property type="evidence" value="ECO:0007669"/>
    <property type="project" value="TreeGrafter"/>
</dbReference>
<dbReference type="GO" id="GO:0006412">
    <property type="term" value="P:translation"/>
    <property type="evidence" value="ECO:0007669"/>
    <property type="project" value="UniProtKB-UniRule"/>
</dbReference>
<dbReference type="CDD" id="cd04457">
    <property type="entry name" value="S1_S28E"/>
    <property type="match status" value="1"/>
</dbReference>
<dbReference type="FunFam" id="2.40.50.140:FF:000145">
    <property type="entry name" value="30S ribosomal protein S28e"/>
    <property type="match status" value="1"/>
</dbReference>
<dbReference type="Gene3D" id="2.40.50.140">
    <property type="entry name" value="Nucleic acid-binding proteins"/>
    <property type="match status" value="1"/>
</dbReference>
<dbReference type="HAMAP" id="MF_00292">
    <property type="entry name" value="Ribosomal_eS28"/>
    <property type="match status" value="1"/>
</dbReference>
<dbReference type="InterPro" id="IPR012340">
    <property type="entry name" value="NA-bd_OB-fold"/>
</dbReference>
<dbReference type="InterPro" id="IPR000289">
    <property type="entry name" value="Ribosomal_eS28"/>
</dbReference>
<dbReference type="NCBIfam" id="NF003080">
    <property type="entry name" value="PRK04007.1"/>
    <property type="match status" value="1"/>
</dbReference>
<dbReference type="PANTHER" id="PTHR10769">
    <property type="entry name" value="40S RIBOSOMAL PROTEIN S28"/>
    <property type="match status" value="1"/>
</dbReference>
<dbReference type="PANTHER" id="PTHR10769:SF3">
    <property type="entry name" value="SMALL RIBOSOMAL SUBUNIT PROTEIN ES28"/>
    <property type="match status" value="1"/>
</dbReference>
<dbReference type="Pfam" id="PF01200">
    <property type="entry name" value="Ribosomal_S28e"/>
    <property type="match status" value="1"/>
</dbReference>
<dbReference type="SUPFAM" id="SSF50249">
    <property type="entry name" value="Nucleic acid-binding proteins"/>
    <property type="match status" value="1"/>
</dbReference>
<name>RS28_NATPD</name>
<protein>
    <recommendedName>
        <fullName evidence="1">Small ribosomal subunit protein eS28</fullName>
    </recommendedName>
    <alternativeName>
        <fullName evidence="2">30S ribosomal protein S28e</fullName>
    </alternativeName>
</protein>
<organism>
    <name type="scientific">Natronomonas pharaonis (strain ATCC 35678 / DSM 2160 / CIP 103997 / JCM 8858 / NBRC 14720 / NCIMB 2260 / Gabara)</name>
    <name type="common">Halobacterium pharaonis</name>
    <dbReference type="NCBI Taxonomy" id="348780"/>
    <lineage>
        <taxon>Archaea</taxon>
        <taxon>Methanobacteriati</taxon>
        <taxon>Methanobacteriota</taxon>
        <taxon>Stenosarchaea group</taxon>
        <taxon>Halobacteria</taxon>
        <taxon>Halobacteriales</taxon>
        <taxon>Haloarculaceae</taxon>
        <taxon>Natronomonas</taxon>
    </lineage>
</organism>